<keyword id="KW-0002">3D-structure</keyword>
<keyword id="KW-0025">Alternative splicing</keyword>
<keyword id="KW-1003">Cell membrane</keyword>
<keyword id="KW-0903">Direct protein sequencing</keyword>
<keyword id="KW-0225">Disease variant</keyword>
<keyword id="KW-1015">Disulfide bond</keyword>
<keyword id="KW-0325">Glycoprotein</keyword>
<keyword id="KW-0393">Immunoglobulin domain</keyword>
<keyword id="KW-0472">Membrane</keyword>
<keyword id="KW-0597">Phosphoprotein</keyword>
<keyword id="KW-1267">Proteomics identification</keyword>
<keyword id="KW-0675">Receptor</keyword>
<keyword id="KW-1185">Reference proteome</keyword>
<keyword id="KW-0732">Signal</keyword>
<keyword id="KW-0812">Transmembrane</keyword>
<keyword id="KW-1133">Transmembrane helix</keyword>
<keyword id="KW-0832">Ubl conjugation</keyword>
<organism>
    <name type="scientific">Homo sapiens</name>
    <name type="common">Human</name>
    <dbReference type="NCBI Taxonomy" id="9606"/>
    <lineage>
        <taxon>Eukaryota</taxon>
        <taxon>Metazoa</taxon>
        <taxon>Chordata</taxon>
        <taxon>Craniata</taxon>
        <taxon>Vertebrata</taxon>
        <taxon>Euteleostomi</taxon>
        <taxon>Mammalia</taxon>
        <taxon>Eutheria</taxon>
        <taxon>Euarchontoglires</taxon>
        <taxon>Primates</taxon>
        <taxon>Haplorrhini</taxon>
        <taxon>Catarrhini</taxon>
        <taxon>Hominidae</taxon>
        <taxon>Homo</taxon>
    </lineage>
</organism>
<gene>
    <name evidence="39" type="primary">IFNGR1</name>
</gene>
<protein>
    <recommendedName>
        <fullName evidence="39">Interferon gamma receptor 1</fullName>
        <shortName>IFN-gamma receptor 1</shortName>
        <shortName>IFN-gamma-R1</shortName>
    </recommendedName>
    <alternativeName>
        <fullName>CDw119</fullName>
    </alternativeName>
    <alternativeName>
        <fullName evidence="36 37">Interferon gamma receptor alpha-chain</fullName>
        <shortName evidence="36">IFN-gamma-R-alpha</shortName>
    </alternativeName>
    <cdAntigenName>CD119</cdAntigenName>
</protein>
<accession>P15260</accession>
<accession>B4DFT7</accession>
<accession>E1P587</accession>
<accession>Q53Y96</accession>
<feature type="signal peptide">
    <location>
        <begin position="1"/>
        <end position="17"/>
    </location>
</feature>
<feature type="chain" id="PRO_0000011009" description="Interferon gamma receptor 1">
    <location>
        <begin position="18"/>
        <end position="489"/>
    </location>
</feature>
<feature type="topological domain" description="Extracellular" evidence="2">
    <location>
        <begin position="18"/>
        <end position="245"/>
    </location>
</feature>
<feature type="transmembrane region" description="Helical" evidence="2">
    <location>
        <begin position="246"/>
        <end position="266"/>
    </location>
</feature>
<feature type="topological domain" description="Cytoplasmic" evidence="2">
    <location>
        <begin position="267"/>
        <end position="489"/>
    </location>
</feature>
<feature type="region of interest" description="Disordered" evidence="3">
    <location>
        <begin position="329"/>
        <end position="437"/>
    </location>
</feature>
<feature type="compositionally biased region" description="Basic and acidic residues" evidence="3">
    <location>
        <begin position="335"/>
        <end position="348"/>
    </location>
</feature>
<feature type="compositionally biased region" description="Polar residues" evidence="3">
    <location>
        <begin position="349"/>
        <end position="360"/>
    </location>
</feature>
<feature type="compositionally biased region" description="Low complexity" evidence="3">
    <location>
        <begin position="379"/>
        <end position="391"/>
    </location>
</feature>
<feature type="compositionally biased region" description="Basic and acidic residues" evidence="3">
    <location>
        <begin position="401"/>
        <end position="412"/>
    </location>
</feature>
<feature type="compositionally biased region" description="Low complexity" evidence="3">
    <location>
        <begin position="415"/>
        <end position="429"/>
    </location>
</feature>
<feature type="modified residue" description="Phosphoserine" evidence="1">
    <location>
        <position position="369"/>
    </location>
</feature>
<feature type="modified residue" description="Phosphothreonine" evidence="1">
    <location>
        <position position="372"/>
    </location>
</feature>
<feature type="modified residue" description="Phosphoserine" evidence="1">
    <location>
        <position position="378"/>
    </location>
</feature>
<feature type="modified residue" description="Phosphoserine" evidence="1">
    <location>
        <position position="403"/>
    </location>
</feature>
<feature type="modified residue" description="Phosphotyrosine" evidence="30">
    <location>
        <position position="457"/>
    </location>
</feature>
<feature type="glycosylation site" description="N-linked (GlcNAc...) asparagine" evidence="2">
    <location>
        <position position="34"/>
    </location>
</feature>
<feature type="glycosylation site" description="N-linked (GlcNAc...) asparagine" evidence="2">
    <location>
        <position position="79"/>
    </location>
</feature>
<feature type="glycosylation site" description="N-linked (GlcNAc...) asparagine" evidence="2">
    <location>
        <position position="86"/>
    </location>
</feature>
<feature type="glycosylation site" description="N-linked (GlcNAc...) asparagine" evidence="2">
    <location>
        <position position="179"/>
    </location>
</feature>
<feature type="glycosylation site" description="N-linked (GlcNAc...) asparagine" evidence="2">
    <location>
        <position position="240"/>
    </location>
</feature>
<feature type="disulfide bond" evidence="31">
    <location>
        <begin position="77"/>
        <end position="85"/>
    </location>
</feature>
<feature type="disulfide bond" evidence="31">
    <location>
        <begin position="122"/>
        <end position="167"/>
    </location>
</feature>
<feature type="disulfide bond" evidence="31">
    <location>
        <begin position="195"/>
        <end position="200"/>
    </location>
</feature>
<feature type="disulfide bond" evidence="31">
    <location>
        <begin position="214"/>
        <end position="235"/>
    </location>
</feature>
<feature type="splice variant" id="VSP_055589" description="In isoform 2." evidence="35">
    <original>MALLFLLPLVMQGVSRAEMGTADLGPSS</original>
    <variation>MLLKSPENSLLQFQFKYG</variation>
    <location>
        <begin position="1"/>
        <end position="28"/>
    </location>
</feature>
<feature type="splice variant" id="VSP_055590" description="In isoform 2." evidence="35">
    <original>QYKILTQKEDDCD</original>
    <variation>KRSCAFSLFSFFI</variation>
    <location>
        <begin position="184"/>
        <end position="196"/>
    </location>
</feature>
<feature type="splice variant" id="VSP_055591" description="In isoform 2." evidence="35">
    <location>
        <begin position="197"/>
        <end position="489"/>
    </location>
</feature>
<feature type="sequence variant" id="VAR_080058" description="May influence susceptibility to autoimmune and inflammatory diseases such as systemic lupus erythematosus, atopic asthma and atopic dermatitis complicated by eczema herpeticum; no significant effect on interferon-gamma-mediated signaling pathway; dbSNP:rs11575936." evidence="4 9 17 21">
    <original>V</original>
    <variation>M</variation>
    <location>
        <position position="14"/>
    </location>
</feature>
<feature type="sequence variant" id="VAR_080059" description="In IMD27A; dbSNP:rs945137618." evidence="23">
    <original>I</original>
    <variation>T</variation>
    <location>
        <position position="37"/>
    </location>
</feature>
<feature type="sequence variant" id="VAR_080060" description="In IMD27A; interferon-gamma-mediated signaling pathway completely abrogated; dbSNP:rs121912715." evidence="6 17">
    <original>V</original>
    <variation>E</variation>
    <location>
        <position position="61"/>
    </location>
</feature>
<feature type="sequence variant" id="VAR_019281" description="May influence susceptibility to atopic dermatitis complicated by eczema herpeticum; could be detected on the cell surface; no significant effect on interferon-gamma-mediated signaling pathway; dbSNP:rs17175322." evidence="17 21 34">
    <original>V</original>
    <variation>I</variation>
    <location>
        <position position="61"/>
    </location>
</feature>
<feature type="sequence variant" id="VAR_080062" description="In IMD27A; interferon-gamma-mediated signaling pathway severely reduced although not completely abrogated." evidence="8 17">
    <original>V</original>
    <variation>G</variation>
    <location>
        <position position="63"/>
    </location>
</feature>
<feature type="sequence variant" id="VAR_080063" description="In IMD27A; could be detected on the cell surface; interferon-gamma-mediated signaling pathway completely abrogated." evidence="13 17">
    <original>Y</original>
    <variation>C</variation>
    <location>
        <position position="66"/>
    </location>
</feature>
<feature type="sequence variant" id="VAR_080064" description="In IMD27A; interferon-gamma-mediated signaling pathway completely abrogated." evidence="15 17">
    <original>C</original>
    <variation>F</variation>
    <location>
        <position position="77"/>
    </location>
</feature>
<feature type="sequence variant" id="VAR_017577" description="In IMD27A; fails to bind IFN-gamma; could be detected on the cell surface; interferon-gamma-mediated signaling pathway completely abrogated; dbSNP:rs104893974." evidence="6 13 17">
    <original>C</original>
    <variation>Y</variation>
    <location>
        <position position="77"/>
    </location>
</feature>
<feature type="sequence variant" id="VAR_080065" description="In IMD27A; interferon-gamma-mediated signaling pathway completely abrogated." evidence="16 17">
    <original>C</original>
    <variation>Y</variation>
    <location>
        <position position="85"/>
    </location>
</feature>
<feature type="sequence variant" id="VAR_017578" description="In IMD27A; interferon-gamma-mediated signaling pathway severely reduced; dbSNP:rs104893973." evidence="14 17 33">
    <original>I</original>
    <variation>T</variation>
    <location>
        <position position="87"/>
    </location>
</feature>
<feature type="sequence variant" id="VAR_017579" description="In IMD27A; fails to bind IFN-gamma." evidence="6">
    <location>
        <begin position="99"/>
        <end position="102"/>
    </location>
</feature>
<feature type="sequence variant" id="VAR_080066" description="In IMD27A." evidence="18">
    <location>
        <begin position="113"/>
        <end position="489"/>
    </location>
</feature>
<feature type="sequence variant" id="VAR_080067" description="Could be detected on the cell surface; does not affect interferon-gamma-mediated signaling pathway; dbSNP:rs387906572." evidence="17">
    <original>S</original>
    <variation>L</variation>
    <location>
        <position position="149"/>
    </location>
</feature>
<feature type="sequence variant" id="VAR_080068" description="In dbSNP:rs137854904." evidence="23">
    <original>G</original>
    <variation>R</variation>
    <location>
        <position position="180"/>
    </location>
</feature>
<feature type="sequence variant" id="VAR_080069" description="In dbSNP:rs55666220." evidence="23">
    <original>E</original>
    <variation>K</variation>
    <location>
        <position position="197"/>
    </location>
</feature>
<feature type="sequence variant" id="VAR_080070" description="In IMD27A." evidence="6">
    <location>
        <position position="218"/>
    </location>
</feature>
<feature type="sequence variant" id="VAR_080071" description="In IMD27A; dbSNP:rs1311661488." evidence="20">
    <original>G</original>
    <variation>R</variation>
    <location>
        <position position="219"/>
    </location>
</feature>
<feature type="sequence variant" id="VAR_080072" description="In IMD27A." evidence="22">
    <location>
        <begin position="224"/>
        <end position="489"/>
    </location>
</feature>
<feature type="sequence variant" id="VAR_080073" description="In IMD27B." evidence="10">
    <location>
        <begin position="278"/>
        <end position="489"/>
    </location>
</feature>
<feature type="sequence variant" id="VAR_019282" description="Risk factor for Helicobacter pylori infection; no significant effect on interferon-gamma-mediated signaling pathway; dbSNP:rs17175350." evidence="11 17 34">
    <original>H</original>
    <variation>P</variation>
    <location>
        <position position="335"/>
    </location>
</feature>
<feature type="sequence variant" id="VAR_080074" description="No significant effect on interferon-gamma-mediated signaling pathway; dbSNP:rs199641966." evidence="17">
    <original>I</original>
    <variation>M</variation>
    <location>
        <position position="352"/>
    </location>
</feature>
<feature type="sequence variant" id="VAR_080075" description="Risk factor for atopic dermatitis complicated by eczema herpeticum; does not affect completely interferon-gamma-mediated signaling pathway; dbSNP:rs374787981." evidence="21">
    <original>Y</original>
    <variation>C</variation>
    <location>
        <position position="397"/>
    </location>
</feature>
<feature type="sequence variant" id="VAR_019283" description="Risk factor for Helicobacter pylori infection; may influence susceptibility to allergic diseases such as bronchial asthma and allergic rhinitis; could be detected on the cell surface; no significant effect on interferon-gamma-mediated signaling pathway; dbSNP:rs1887415." evidence="11 12 17 34">
    <original>L</original>
    <variation>P</variation>
    <location>
        <position position="467"/>
    </location>
</feature>
<feature type="sequence variant" id="VAR_080076" description="In IMD27A; dbSNP:rs752113778." evidence="19">
    <original>S</original>
    <variation>F</variation>
    <location>
        <position position="485"/>
    </location>
</feature>
<feature type="mutagenesis site" description="Loss of function in the interferon-gamma-mediated signaling pathway." evidence="17">
    <original>V</original>
    <variation>Q</variation>
    <location>
        <position position="61"/>
    </location>
</feature>
<feature type="mutagenesis site" description="Strong decreased level of ubiquitination; when associated with R-279 and R-285." evidence="24">
    <original>K</original>
    <variation>R</variation>
    <location>
        <position position="277"/>
    </location>
</feature>
<feature type="mutagenesis site" description="Strong decreased level of ubiquitination; when associated with R-277 and R-285." evidence="24">
    <original>K</original>
    <variation>R</variation>
    <location>
        <position position="279"/>
    </location>
</feature>
<feature type="mutagenesis site" description="Strong decreased level of ubiquitination; when associated with R-277 and R-279." evidence="24">
    <original>K</original>
    <variation>R</variation>
    <location>
        <position position="285"/>
    </location>
</feature>
<feature type="strand" evidence="40">
    <location>
        <begin position="33"/>
        <end position="38"/>
    </location>
</feature>
<feature type="strand" evidence="40">
    <location>
        <begin position="40"/>
        <end position="42"/>
    </location>
</feature>
<feature type="strand" evidence="40">
    <location>
        <begin position="45"/>
        <end position="49"/>
    </location>
</feature>
<feature type="strand" evidence="40">
    <location>
        <begin position="58"/>
        <end position="65"/>
    </location>
</feature>
<feature type="strand" evidence="40">
    <location>
        <begin position="69"/>
        <end position="71"/>
    </location>
</feature>
<feature type="strand" evidence="40">
    <location>
        <begin position="74"/>
        <end position="86"/>
    </location>
</feature>
<feature type="helix" evidence="40">
    <location>
        <begin position="88"/>
        <end position="90"/>
    </location>
</feature>
<feature type="strand" evidence="40">
    <location>
        <begin position="98"/>
        <end position="106"/>
    </location>
</feature>
<feature type="helix" evidence="40">
    <location>
        <begin position="121"/>
        <end position="124"/>
    </location>
</feature>
<feature type="strand" evidence="40">
    <location>
        <begin position="131"/>
        <end position="136"/>
    </location>
</feature>
<feature type="strand" evidence="40">
    <location>
        <begin position="138"/>
        <end position="146"/>
    </location>
</feature>
<feature type="helix" evidence="40">
    <location>
        <begin position="149"/>
        <end position="151"/>
    </location>
</feature>
<feature type="strand" evidence="40">
    <location>
        <begin position="168"/>
        <end position="178"/>
    </location>
</feature>
<feature type="strand" evidence="40">
    <location>
        <begin position="181"/>
        <end position="191"/>
    </location>
</feature>
<feature type="turn" evidence="41">
    <location>
        <begin position="192"/>
        <end position="194"/>
    </location>
</feature>
<feature type="strand" evidence="40">
    <location>
        <begin position="197"/>
        <end position="205"/>
    </location>
</feature>
<feature type="strand" evidence="40">
    <location>
        <begin position="212"/>
        <end position="221"/>
    </location>
</feature>
<feature type="turn" evidence="40">
    <location>
        <begin position="222"/>
        <end position="224"/>
    </location>
</feature>
<feature type="strand" evidence="40">
    <location>
        <begin position="234"/>
        <end position="237"/>
    </location>
</feature>
<reference key="1">
    <citation type="journal article" date="1988" name="Cell">
        <title>Molecular cloning and expression of the human interferon-gamma receptor.</title>
        <authorList>
            <person name="Aguet M."/>
            <person name="Dembic Z."/>
            <person name="Merlin G."/>
        </authorList>
    </citation>
    <scope>NUCLEOTIDE SEQUENCE [MRNA] (ISOFORM 1)</scope>
    <scope>FUNCTION</scope>
</reference>
<reference key="2">
    <citation type="submission" date="2004-04" db="EMBL/GenBank/DDBJ databases">
        <authorList>
            <consortium name="SeattleSNPs variation discovery resource"/>
        </authorList>
    </citation>
    <scope>NUCLEOTIDE SEQUENCE [GENOMIC DNA]</scope>
    <scope>VARIANTS ILE-61; PRO-335 AND PRO-467</scope>
</reference>
<reference key="3">
    <citation type="submission" date="2003-05" db="EMBL/GenBank/DDBJ databases">
        <title>Cloning of human full-length CDSs in BD Creator(TM) system donor vector.</title>
        <authorList>
            <person name="Kalnine N."/>
            <person name="Chen X."/>
            <person name="Rolfs A."/>
            <person name="Halleck A."/>
            <person name="Hines L."/>
            <person name="Eisenstein S."/>
            <person name="Koundinya M."/>
            <person name="Raphael J."/>
            <person name="Moreira D."/>
            <person name="Kelley T."/>
            <person name="LaBaer J."/>
            <person name="Lin Y."/>
            <person name="Phelan M."/>
            <person name="Farmer A."/>
        </authorList>
    </citation>
    <scope>NUCLEOTIDE SEQUENCE [LARGE SCALE MRNA] (ISOFORM 1)</scope>
</reference>
<reference key="4">
    <citation type="journal article" date="2004" name="Nat. Genet.">
        <title>Complete sequencing and characterization of 21,243 full-length human cDNAs.</title>
        <authorList>
            <person name="Ota T."/>
            <person name="Suzuki Y."/>
            <person name="Nishikawa T."/>
            <person name="Otsuki T."/>
            <person name="Sugiyama T."/>
            <person name="Irie R."/>
            <person name="Wakamatsu A."/>
            <person name="Hayashi K."/>
            <person name="Sato H."/>
            <person name="Nagai K."/>
            <person name="Kimura K."/>
            <person name="Makita H."/>
            <person name="Sekine M."/>
            <person name="Obayashi M."/>
            <person name="Nishi T."/>
            <person name="Shibahara T."/>
            <person name="Tanaka T."/>
            <person name="Ishii S."/>
            <person name="Yamamoto J."/>
            <person name="Saito K."/>
            <person name="Kawai Y."/>
            <person name="Isono Y."/>
            <person name="Nakamura Y."/>
            <person name="Nagahari K."/>
            <person name="Murakami K."/>
            <person name="Yasuda T."/>
            <person name="Iwayanagi T."/>
            <person name="Wagatsuma M."/>
            <person name="Shiratori A."/>
            <person name="Sudo H."/>
            <person name="Hosoiri T."/>
            <person name="Kaku Y."/>
            <person name="Kodaira H."/>
            <person name="Kondo H."/>
            <person name="Sugawara M."/>
            <person name="Takahashi M."/>
            <person name="Kanda K."/>
            <person name="Yokoi T."/>
            <person name="Furuya T."/>
            <person name="Kikkawa E."/>
            <person name="Omura Y."/>
            <person name="Abe K."/>
            <person name="Kamihara K."/>
            <person name="Katsuta N."/>
            <person name="Sato K."/>
            <person name="Tanikawa M."/>
            <person name="Yamazaki M."/>
            <person name="Ninomiya K."/>
            <person name="Ishibashi T."/>
            <person name="Yamashita H."/>
            <person name="Murakawa K."/>
            <person name="Fujimori K."/>
            <person name="Tanai H."/>
            <person name="Kimata M."/>
            <person name="Watanabe M."/>
            <person name="Hiraoka S."/>
            <person name="Chiba Y."/>
            <person name="Ishida S."/>
            <person name="Ono Y."/>
            <person name="Takiguchi S."/>
            <person name="Watanabe S."/>
            <person name="Yosida M."/>
            <person name="Hotuta T."/>
            <person name="Kusano J."/>
            <person name="Kanehori K."/>
            <person name="Takahashi-Fujii A."/>
            <person name="Hara H."/>
            <person name="Tanase T.-O."/>
            <person name="Nomura Y."/>
            <person name="Togiya S."/>
            <person name="Komai F."/>
            <person name="Hara R."/>
            <person name="Takeuchi K."/>
            <person name="Arita M."/>
            <person name="Imose N."/>
            <person name="Musashino K."/>
            <person name="Yuuki H."/>
            <person name="Oshima A."/>
            <person name="Sasaki N."/>
            <person name="Aotsuka S."/>
            <person name="Yoshikawa Y."/>
            <person name="Matsunawa H."/>
            <person name="Ichihara T."/>
            <person name="Shiohata N."/>
            <person name="Sano S."/>
            <person name="Moriya S."/>
            <person name="Momiyama H."/>
            <person name="Satoh N."/>
            <person name="Takami S."/>
            <person name="Terashima Y."/>
            <person name="Suzuki O."/>
            <person name="Nakagawa S."/>
            <person name="Senoh A."/>
            <person name="Mizoguchi H."/>
            <person name="Goto Y."/>
            <person name="Shimizu F."/>
            <person name="Wakebe H."/>
            <person name="Hishigaki H."/>
            <person name="Watanabe T."/>
            <person name="Sugiyama A."/>
            <person name="Takemoto M."/>
            <person name="Kawakami B."/>
            <person name="Yamazaki M."/>
            <person name="Watanabe K."/>
            <person name="Kumagai A."/>
            <person name="Itakura S."/>
            <person name="Fukuzumi Y."/>
            <person name="Fujimori Y."/>
            <person name="Komiyama M."/>
            <person name="Tashiro H."/>
            <person name="Tanigami A."/>
            <person name="Fujiwara T."/>
            <person name="Ono T."/>
            <person name="Yamada K."/>
            <person name="Fujii Y."/>
            <person name="Ozaki K."/>
            <person name="Hirao M."/>
            <person name="Ohmori Y."/>
            <person name="Kawabata A."/>
            <person name="Hikiji T."/>
            <person name="Kobatake N."/>
            <person name="Inagaki H."/>
            <person name="Ikema Y."/>
            <person name="Okamoto S."/>
            <person name="Okitani R."/>
            <person name="Kawakami T."/>
            <person name="Noguchi S."/>
            <person name="Itoh T."/>
            <person name="Shigeta K."/>
            <person name="Senba T."/>
            <person name="Matsumura K."/>
            <person name="Nakajima Y."/>
            <person name="Mizuno T."/>
            <person name="Morinaga M."/>
            <person name="Sasaki M."/>
            <person name="Togashi T."/>
            <person name="Oyama M."/>
            <person name="Hata H."/>
            <person name="Watanabe M."/>
            <person name="Komatsu T."/>
            <person name="Mizushima-Sugano J."/>
            <person name="Satoh T."/>
            <person name="Shirai Y."/>
            <person name="Takahashi Y."/>
            <person name="Nakagawa K."/>
            <person name="Okumura K."/>
            <person name="Nagase T."/>
            <person name="Nomura N."/>
            <person name="Kikuchi H."/>
            <person name="Masuho Y."/>
            <person name="Yamashita R."/>
            <person name="Nakai K."/>
            <person name="Yada T."/>
            <person name="Nakamura Y."/>
            <person name="Ohara O."/>
            <person name="Isogai T."/>
            <person name="Sugano S."/>
        </authorList>
    </citation>
    <scope>NUCLEOTIDE SEQUENCE [LARGE SCALE MRNA] (ISOFORM 2)</scope>
    <source>
        <tissue>Amygdala</tissue>
    </source>
</reference>
<reference key="5">
    <citation type="journal article" date="2003" name="Nature">
        <title>The DNA sequence and analysis of human chromosome 6.</title>
        <authorList>
            <person name="Mungall A.J."/>
            <person name="Palmer S.A."/>
            <person name="Sims S.K."/>
            <person name="Edwards C.A."/>
            <person name="Ashurst J.L."/>
            <person name="Wilming L."/>
            <person name="Jones M.C."/>
            <person name="Horton R."/>
            <person name="Hunt S.E."/>
            <person name="Scott C.E."/>
            <person name="Gilbert J.G.R."/>
            <person name="Clamp M.E."/>
            <person name="Bethel G."/>
            <person name="Milne S."/>
            <person name="Ainscough R."/>
            <person name="Almeida J.P."/>
            <person name="Ambrose K.D."/>
            <person name="Andrews T.D."/>
            <person name="Ashwell R.I.S."/>
            <person name="Babbage A.K."/>
            <person name="Bagguley C.L."/>
            <person name="Bailey J."/>
            <person name="Banerjee R."/>
            <person name="Barker D.J."/>
            <person name="Barlow K.F."/>
            <person name="Bates K."/>
            <person name="Beare D.M."/>
            <person name="Beasley H."/>
            <person name="Beasley O."/>
            <person name="Bird C.P."/>
            <person name="Blakey S.E."/>
            <person name="Bray-Allen S."/>
            <person name="Brook J."/>
            <person name="Brown A.J."/>
            <person name="Brown J.Y."/>
            <person name="Burford D.C."/>
            <person name="Burrill W."/>
            <person name="Burton J."/>
            <person name="Carder C."/>
            <person name="Carter N.P."/>
            <person name="Chapman J.C."/>
            <person name="Clark S.Y."/>
            <person name="Clark G."/>
            <person name="Clee C.M."/>
            <person name="Clegg S."/>
            <person name="Cobley V."/>
            <person name="Collier R.E."/>
            <person name="Collins J.E."/>
            <person name="Colman L.K."/>
            <person name="Corby N.R."/>
            <person name="Coville G.J."/>
            <person name="Culley K.M."/>
            <person name="Dhami P."/>
            <person name="Davies J."/>
            <person name="Dunn M."/>
            <person name="Earthrowl M.E."/>
            <person name="Ellington A.E."/>
            <person name="Evans K.A."/>
            <person name="Faulkner L."/>
            <person name="Francis M.D."/>
            <person name="Frankish A."/>
            <person name="Frankland J."/>
            <person name="French L."/>
            <person name="Garner P."/>
            <person name="Garnett J."/>
            <person name="Ghori M.J."/>
            <person name="Gilby L.M."/>
            <person name="Gillson C.J."/>
            <person name="Glithero R.J."/>
            <person name="Grafham D.V."/>
            <person name="Grant M."/>
            <person name="Gribble S."/>
            <person name="Griffiths C."/>
            <person name="Griffiths M.N.D."/>
            <person name="Hall R."/>
            <person name="Halls K.S."/>
            <person name="Hammond S."/>
            <person name="Harley J.L."/>
            <person name="Hart E.A."/>
            <person name="Heath P.D."/>
            <person name="Heathcott R."/>
            <person name="Holmes S.J."/>
            <person name="Howden P.J."/>
            <person name="Howe K.L."/>
            <person name="Howell G.R."/>
            <person name="Huckle E."/>
            <person name="Humphray S.J."/>
            <person name="Humphries M.D."/>
            <person name="Hunt A.R."/>
            <person name="Johnson C.M."/>
            <person name="Joy A.A."/>
            <person name="Kay M."/>
            <person name="Keenan S.J."/>
            <person name="Kimberley A.M."/>
            <person name="King A."/>
            <person name="Laird G.K."/>
            <person name="Langford C."/>
            <person name="Lawlor S."/>
            <person name="Leongamornlert D.A."/>
            <person name="Leversha M."/>
            <person name="Lloyd C.R."/>
            <person name="Lloyd D.M."/>
            <person name="Loveland J.E."/>
            <person name="Lovell J."/>
            <person name="Martin S."/>
            <person name="Mashreghi-Mohammadi M."/>
            <person name="Maslen G.L."/>
            <person name="Matthews L."/>
            <person name="McCann O.T."/>
            <person name="McLaren S.J."/>
            <person name="McLay K."/>
            <person name="McMurray A."/>
            <person name="Moore M.J.F."/>
            <person name="Mullikin J.C."/>
            <person name="Niblett D."/>
            <person name="Nickerson T."/>
            <person name="Novik K.L."/>
            <person name="Oliver K."/>
            <person name="Overton-Larty E.K."/>
            <person name="Parker A."/>
            <person name="Patel R."/>
            <person name="Pearce A.V."/>
            <person name="Peck A.I."/>
            <person name="Phillimore B.J.C.T."/>
            <person name="Phillips S."/>
            <person name="Plumb R.W."/>
            <person name="Porter K.M."/>
            <person name="Ramsey Y."/>
            <person name="Ranby S.A."/>
            <person name="Rice C.M."/>
            <person name="Ross M.T."/>
            <person name="Searle S.M."/>
            <person name="Sehra H.K."/>
            <person name="Sheridan E."/>
            <person name="Skuce C.D."/>
            <person name="Smith S."/>
            <person name="Smith M."/>
            <person name="Spraggon L."/>
            <person name="Squares S.L."/>
            <person name="Steward C.A."/>
            <person name="Sycamore N."/>
            <person name="Tamlyn-Hall G."/>
            <person name="Tester J."/>
            <person name="Theaker A.J."/>
            <person name="Thomas D.W."/>
            <person name="Thorpe A."/>
            <person name="Tracey A."/>
            <person name="Tromans A."/>
            <person name="Tubby B."/>
            <person name="Wall M."/>
            <person name="Wallis J.M."/>
            <person name="West A.P."/>
            <person name="White S.S."/>
            <person name="Whitehead S.L."/>
            <person name="Whittaker H."/>
            <person name="Wild A."/>
            <person name="Willey D.J."/>
            <person name="Wilmer T.E."/>
            <person name="Wood J.M."/>
            <person name="Wray P.W."/>
            <person name="Wyatt J.C."/>
            <person name="Young L."/>
            <person name="Younger R.M."/>
            <person name="Bentley D.R."/>
            <person name="Coulson A."/>
            <person name="Durbin R.M."/>
            <person name="Hubbard T."/>
            <person name="Sulston J.E."/>
            <person name="Dunham I."/>
            <person name="Rogers J."/>
            <person name="Beck S."/>
        </authorList>
    </citation>
    <scope>NUCLEOTIDE SEQUENCE [LARGE SCALE GENOMIC DNA]</scope>
</reference>
<reference key="6">
    <citation type="submission" date="2005-09" db="EMBL/GenBank/DDBJ databases">
        <authorList>
            <person name="Mural R.J."/>
            <person name="Istrail S."/>
            <person name="Sutton G.G."/>
            <person name="Florea L."/>
            <person name="Halpern A.L."/>
            <person name="Mobarry C.M."/>
            <person name="Lippert R."/>
            <person name="Walenz B."/>
            <person name="Shatkay H."/>
            <person name="Dew I."/>
            <person name="Miller J.R."/>
            <person name="Flanigan M.J."/>
            <person name="Edwards N.J."/>
            <person name="Bolanos R."/>
            <person name="Fasulo D."/>
            <person name="Halldorsson B.V."/>
            <person name="Hannenhalli S."/>
            <person name="Turner R."/>
            <person name="Yooseph S."/>
            <person name="Lu F."/>
            <person name="Nusskern D.R."/>
            <person name="Shue B.C."/>
            <person name="Zheng X.H."/>
            <person name="Zhong F."/>
            <person name="Delcher A.L."/>
            <person name="Huson D.H."/>
            <person name="Kravitz S.A."/>
            <person name="Mouchard L."/>
            <person name="Reinert K."/>
            <person name="Remington K.A."/>
            <person name="Clark A.G."/>
            <person name="Waterman M.S."/>
            <person name="Eichler E.E."/>
            <person name="Adams M.D."/>
            <person name="Hunkapiller M.W."/>
            <person name="Myers E.W."/>
            <person name="Venter J.C."/>
        </authorList>
    </citation>
    <scope>NUCLEOTIDE SEQUENCE [LARGE SCALE GENOMIC DNA]</scope>
</reference>
<reference key="7">
    <citation type="journal article" date="2004" name="Genome Res.">
        <title>The status, quality, and expansion of the NIH full-length cDNA project: the Mammalian Gene Collection (MGC).</title>
        <authorList>
            <consortium name="The MGC Project Team"/>
        </authorList>
    </citation>
    <scope>NUCLEOTIDE SEQUENCE [LARGE SCALE MRNA] (ISOFORM 1)</scope>
    <source>
        <tissue>Prostate</tissue>
    </source>
</reference>
<reference key="8">
    <citation type="journal article" date="1993" name="Biochemistry">
        <title>Alignment of disulfide bonds of the extracellular domain of the interferon gamma receptor and investigation of their role in biological activity.</title>
        <authorList>
            <person name="Stueber D."/>
            <person name="Friedlein A."/>
            <person name="Fountoulakis M."/>
            <person name="Lahm H.-W."/>
            <person name="Garotta G."/>
        </authorList>
    </citation>
    <scope>DISULFIDE BONDS</scope>
    <scope>PARTIAL PROTEIN SEQUENCE</scope>
    <scope>MUTAGENESIS</scope>
</reference>
<reference key="9">
    <citation type="journal article" date="1994" name="EMBO J.">
        <title>Ligand-induced IFN gamma receptor tyrosine phosphorylation couples the receptor to its signal transduction system (p91).</title>
        <authorList>
            <person name="Greenlund A.C."/>
            <person name="Farrar M.A."/>
            <person name="Viviano B.L."/>
            <person name="Schreiber R.D."/>
        </authorList>
    </citation>
    <scope>FUNCTION</scope>
    <scope>INTERACTION WITH STAT1</scope>
    <scope>PHOSPHORYLATION AT TYR-457</scope>
</reference>
<reference key="10">
    <citation type="journal article" date="1995" name="J. Biol. Chem.">
        <title>The Jak kinases differentially associate with the alpha and beta (accessory factor) chains of the interferon gamma receptor to form a functional receptor unit capable of activating STAT transcription factors.</title>
        <authorList>
            <person name="Sakatsume M."/>
            <person name="Igarashi K."/>
            <person name="Winestock K.D."/>
            <person name="Garotta G."/>
            <person name="Larner A.C."/>
            <person name="Finbloom D.S."/>
        </authorList>
    </citation>
    <scope>FUNCTION</scope>
    <scope>INTERACTION WITH IFNGR2 AND JAK1</scope>
    <scope>PHOSPHORYLATION</scope>
</reference>
<reference key="11">
    <citation type="journal article" date="1995" name="J. Biol. Chem.">
        <title>Interaction between the components of the interferon gamma receptor complex.</title>
        <authorList>
            <person name="Kotenko S.V."/>
            <person name="Izotova L.S."/>
            <person name="Pollack B.P."/>
            <person name="Mariano T.M."/>
            <person name="Donnelly R.J."/>
            <person name="Muthukumaran G."/>
            <person name="Cook J.R."/>
            <person name="Garotta G."/>
            <person name="Silvennoinen O."/>
            <person name="Ihle J.N."/>
        </authorList>
    </citation>
    <scope>FUNCTION</scope>
    <scope>PHOSPHORYLATION</scope>
</reference>
<reference key="12">
    <citation type="journal article" date="1999" name="Immunogenetics">
        <title>Association of the interferon-gamma receptor variant (Val14Met) with systemic lupus erythematosus.</title>
        <authorList>
            <person name="Tanaka Y."/>
            <person name="Nakashima H."/>
            <person name="Hisano C."/>
            <person name="Kohsaka T."/>
            <person name="Nemoto Y."/>
            <person name="Niiro H."/>
            <person name="Otsuka T."/>
            <person name="Otsuka T."/>
            <person name="Imamura T."/>
            <person name="Niho Y."/>
        </authorList>
    </citation>
    <scope>INVOLVEMENT IN SUSCEPTIBILITY TO SYSTEMIC LUPUS ERYTHEMATOSUS</scope>
    <scope>VARIANT MET-14</scope>
</reference>
<reference key="13">
    <citation type="journal article" date="1999" name="Nat. Genet.">
        <title>A human IFNGR1 small deletion hotspot associated with dominant susceptibility to mycobacterial infection.</title>
        <authorList>
            <person name="Jouanguy E."/>
            <person name="Lamhamedi-Cherradi S."/>
            <person name="Lammas D."/>
            <person name="Dorman S.E."/>
            <person name="Fondaneche M.C."/>
            <person name="Dupuis S."/>
            <person name="Doeffinger R."/>
            <person name="Altare F."/>
            <person name="Girdlestone J."/>
            <person name="Emile J.F."/>
            <person name="Ducoulombier H."/>
            <person name="Edgar D."/>
            <person name="Clarke J."/>
            <person name="Oxelius V.A."/>
            <person name="Brai M."/>
            <person name="Novelli V."/>
            <person name="Heyne K."/>
            <person name="Fischer A."/>
            <person name="Holland S.M."/>
            <person name="Kumararatne D.S."/>
            <person name="Schreiber R.D."/>
            <person name="Casanova J.L."/>
        </authorList>
    </citation>
    <scope>INVOLVEMENT IN IMD27B</scope>
</reference>
<reference key="14">
    <citation type="journal article" date="2013" name="J. Proteome Res.">
        <title>Toward a comprehensive characterization of a human cancer cell phosphoproteome.</title>
        <authorList>
            <person name="Zhou H."/>
            <person name="Di Palma S."/>
            <person name="Preisinger C."/>
            <person name="Peng M."/>
            <person name="Polat A.N."/>
            <person name="Heck A.J."/>
            <person name="Mohammed S."/>
        </authorList>
    </citation>
    <scope>IDENTIFICATION BY MASS SPECTROMETRY [LARGE SCALE ANALYSIS]</scope>
    <source>
        <tissue>Erythroleukemia</tissue>
    </source>
</reference>
<reference key="15">
    <citation type="journal article" date="2017" name="Biochem. J.">
        <title>Post-translational modification of the interferon-gamma receptor alters its stability and signaling.</title>
        <authorList>
            <person name="Londino J.D."/>
            <person name="Gulick D.L."/>
            <person name="Lear T.B."/>
            <person name="Suber T.L."/>
            <person name="Weathington N.M."/>
            <person name="Masa L.S."/>
            <person name="Chen B.B."/>
            <person name="Mallampalli R.K."/>
        </authorList>
    </citation>
    <scope>FUNCTION</scope>
    <scope>UBIQUITINATION</scope>
    <scope>MUTAGENESIS OF LYS-277; LYS-279 AND LYS-285</scope>
    <scope>SUBCELLULAR LOCATION</scope>
</reference>
<reference key="16">
    <citation type="journal article" date="2018" name="J. Virol.">
        <title>Casein Kinase 1alpha Mediates the Degradation of Receptors for Type I and Type II Interferons Caused by Hemagglutinin of Influenza A Virus.</title>
        <authorList>
            <person name="Xia C."/>
            <person name="Wolf J.J."/>
            <person name="Vijayan M."/>
            <person name="Studstill C.J."/>
            <person name="Ma W."/>
            <person name="Hahm B."/>
        </authorList>
    </citation>
    <scope>PHOSPHORYLATION</scope>
    <scope>UBIQUITINATION</scope>
</reference>
<reference key="17">
    <citation type="journal article" date="1995" name="Nature">
        <title>Crystal structure of a complex between interferon-gamma and its soluble high-affinity receptor.</title>
        <authorList>
            <person name="Walter M.R."/>
            <person name="Windsor W.T."/>
            <person name="Nagabhushan T.L."/>
            <person name="Lundell D.J."/>
            <person name="Lunn C.A."/>
            <person name="Zauodny P.J."/>
            <person name="Narula S.K."/>
        </authorList>
    </citation>
    <scope>X-RAY CRYSTALLOGRAPHY (2.9 ANGSTROMS) OF 26-248</scope>
    <scope>FUNCTION</scope>
</reference>
<reference key="18">
    <citation type="journal article" date="1997" name="J. Mol. Biol.">
        <title>Neutralizing epitopes on the extracellular interferon gamma receptor (IFNgammaR) alpha-chain characterized by homolog scanning mutagenesis and X-ray crystal structure of the A6 fab-IFNgammaR1-108 complex.</title>
        <authorList>
            <person name="Sogabe S."/>
            <person name="Stuart F."/>
            <person name="Henke C."/>
            <person name="Bridges A."/>
            <person name="Williams G."/>
            <person name="Birch A."/>
            <person name="Winkler F.K."/>
            <person name="Robinson J.A."/>
        </authorList>
    </citation>
    <scope>X-RAY CRYSTALLOGRAPHY (2.8 ANGSTROMS) OF 28-122 IN COMPLEX WITH ANTIBODY</scope>
</reference>
<reference key="19">
    <citation type="journal article" date="2000" name="Structure">
        <title>Observation of an unexpected third receptor molecule in the crystal structure of human interferon-gamma receptor complex.</title>
        <authorList>
            <person name="Thiel D.J."/>
            <person name="le Du M.-H."/>
            <person name="Walter R.L."/>
            <person name="D'Arcy A."/>
            <person name="Chene C."/>
            <person name="Fountoulakis M."/>
            <person name="Garotta G."/>
            <person name="Winkler F.K."/>
            <person name="Ealick S.E."/>
        </authorList>
    </citation>
    <scope>X-RAY CRYSTALLOGRAPHY (2.9 ANGSTROMS) OF COMPLEX WITH IFNG</scope>
    <scope>FUNCTION</scope>
</reference>
<reference key="20">
    <citation type="journal article" date="1997" name="J. Clin. Invest.">
        <title>Partial interferon-gamma receptor 1 deficiency in a child with tuberculoid bacillus Calmette-Guerin infection and a sibling with clinical tuberculosis.</title>
        <authorList>
            <person name="Jouanguy E."/>
            <person name="Lamhamedi-Cherradi S.-E."/>
            <person name="Altare F."/>
            <person name="Fondaneche M.-C."/>
            <person name="Tuerlinckx D."/>
            <person name="Blanche S."/>
            <person name="Emile J.-F."/>
            <person name="Gaillard J.-L."/>
            <person name="Schreiber R."/>
            <person name="Levin M."/>
            <person name="Fischer A."/>
            <person name="Hivroz C."/>
            <person name="Casanova J.-L."/>
        </authorList>
    </citation>
    <scope>VARIANT IMD27A THR-87</scope>
</reference>
<reference key="21">
    <citation type="journal article" date="2017" name="Hum. Mutat.">
        <title>IFN-gammaR1 defects: Mutation update and description of the IFNGR1 variation database.</title>
        <authorList>
            <person name="van de Vosse E."/>
            <person name="van Dissel J.T."/>
        </authorList>
    </citation>
    <scope>REVIEW</scope>
    <scope>VARIANT IMD27A THR-37</scope>
    <scope>VARIANTS ARG-180 AND LYS-197</scope>
</reference>
<reference key="22">
    <citation type="journal article" date="2000" name="J. Clin. Invest.">
        <title>In a novel form of IFN-gamma receptor 1 deficiency, cell surface receptors fail to bind IFN-gamma.</title>
        <authorList>
            <person name="Jouanguy E."/>
            <person name="Dupuis S."/>
            <person name="Pallier A."/>
            <person name="Doffinger R."/>
            <person name="Fondaneche M.-C."/>
            <person name="Fieschi C."/>
            <person name="Lamhamedi-Cherradi S."/>
            <person name="Altare F."/>
            <person name="Emile J.-F."/>
            <person name="Lutz P."/>
            <person name="Bordigoni P."/>
            <person name="Cokugras H."/>
            <person name="Akcakaya N."/>
            <person name="Landman-Parker J."/>
            <person name="Donnadieu J."/>
            <person name="Camcioglu Y."/>
            <person name="Casanova J.-L."/>
        </authorList>
    </citation>
    <scope>VARIANTS IMD27A GLU-61; TYR-77; 99-TRP--VAL-102 DEL AND GLU-218 DEL</scope>
    <scope>SUBCELLULAR LOCATION</scope>
</reference>
<reference key="23">
    <citation type="journal article" date="2001" name="Clin. Diagn. Lab. Immunol.">
        <title>A point mutation in a domain of gamma interferon receptor 1 provokes severe immunodeficiency.</title>
        <authorList>
            <person name="Allende L.M."/>
            <person name="Lopez-Goyanes A."/>
            <person name="Paz-Artal E."/>
            <person name="Corell A."/>
            <person name="Garcia-Perez M.A."/>
            <person name="Varela P."/>
            <person name="Scarpellini A."/>
            <person name="Negreira S."/>
            <person name="Palenque E."/>
            <person name="Arnaiz-Villena A."/>
        </authorList>
    </citation>
    <scope>VARIANT IMD27A GLY-63</scope>
</reference>
<reference key="24">
    <citation type="journal article" date="2001" name="J. Allergy Clin. Immunol.">
        <title>Association of IFN-gamma and IFN regulatory factor 1 polymorphisms with childhood atopic asthma.</title>
        <authorList>
            <person name="Nakao F."/>
            <person name="Ihara K."/>
            <person name="Kusuhara K."/>
            <person name="Sasaki Y."/>
            <person name="Kinukawa N."/>
            <person name="Takabayashi A."/>
            <person name="Nishima S."/>
            <person name="Hara T."/>
        </authorList>
    </citation>
    <scope>VARIANT MET-14</scope>
</reference>
<reference key="25">
    <citation type="journal article" date="2001" name="Pediatrics">
        <title>Recurrent Mycobacterium avium osteomyelitis associated with a novel dominant interferon gamma receptor mutation.</title>
        <authorList>
            <person name="Villella A."/>
            <person name="Picard C."/>
            <person name="Jouanguy E."/>
            <person name="Dupuis S."/>
            <person name="Popko S."/>
            <person name="Abughali N."/>
            <person name="Meyerson H."/>
            <person name="Casanova J.L."/>
            <person name="Hostoffer R.W."/>
        </authorList>
    </citation>
    <scope>VARIANT IMD27B 278-GLU--SER-489 DEL</scope>
</reference>
<reference key="26">
    <citation type="journal article" date="2003" name="Am. J. Hum. Genet.">
        <title>Genomewide linkage analysis identifies polymorphism in the human interferon-gamma receptor affecting Helicobacter pylori infection.</title>
        <authorList>
            <person name="Thye T."/>
            <person name="Burchard G.D."/>
            <person name="Nilius M."/>
            <person name="Mueller-Myhsok B."/>
            <person name="Horstmann R.D."/>
        </authorList>
    </citation>
    <scope>INVOLVEMENT IN SUSCEPTIBILITY TO HELICOBACTER PYLORI INFECTION</scope>
    <scope>VARIANTS PRO-335 AND PRO-467</scope>
</reference>
<reference key="27">
    <citation type="journal article" date="2003" name="Int. J. Mol. Med.">
        <title>A novel single-nucleotide substitution, Leu 467 Pro, in the interferon-gamma receptor 1 gene associated with allergic diseases.</title>
        <authorList>
            <person name="Aoki M."/>
            <person name="Matsui E."/>
            <person name="Kaneko H."/>
            <person name="Inoue R."/>
            <person name="Fukao T."/>
            <person name="Watanabe M."/>
            <person name="Teramoto T."/>
            <person name="Kato Z."/>
            <person name="Suzuki K."/>
            <person name="Suzuki Y."/>
            <person name="Kasahara K."/>
            <person name="Kondo N."/>
        </authorList>
    </citation>
    <scope>VARIANT PRO-467</scope>
</reference>
<reference key="28">
    <citation type="journal article" date="2004" name="Lancet">
        <title>Clinical features of dominant and recessive interferon gamma receptor 1 deficiencies.</title>
        <authorList>
            <person name="Dorman S.E."/>
            <person name="Picard C."/>
            <person name="Lammas D."/>
            <person name="Heyne K."/>
            <person name="van Dissel J.T."/>
            <person name="Baretto R."/>
            <person name="Rosenzweig S.D."/>
            <person name="Newport M."/>
            <person name="Levin M."/>
            <person name="Roesler J."/>
            <person name="Kumararatne D."/>
            <person name="Casanova J.L."/>
            <person name="Holland S.M."/>
        </authorList>
    </citation>
    <scope>VARIANTS IMD27A CYS-66 AND TYR-77</scope>
</reference>
<reference key="29">
    <citation type="journal article" date="2006" name="Bone Marrow Transplant.">
        <title>Successful hematopoietic stem cell transplantation in a child with active disseminated Mycobacterium fortuitum infection and interferon-gamma receptor 1 deficiency.</title>
        <authorList>
            <person name="Chantrain C.F."/>
            <person name="Bruwier A."/>
            <person name="Brichard B."/>
            <person name="Largent V."/>
            <person name="Chapgier A."/>
            <person name="Feinberg J."/>
            <person name="Casanova J.L."/>
            <person name="Stalens J.P."/>
            <person name="Vermylen C."/>
        </authorList>
    </citation>
    <scope>VARIANT IMD27A PHE-77</scope>
</reference>
<reference key="30">
    <citation type="journal article" date="2006" name="Respiration">
        <title>Disseminated Mycobacterium avium infection in a 20-year-old female with partial recessive IFNgammaR1 deficiency.</title>
        <authorList>
            <person name="Remiszewski P."/>
            <person name="Roszkowska-Sliz B."/>
            <person name="Winek J."/>
            <person name="Chapgier A."/>
            <person name="Feinberg J."/>
            <person name="Langfort R."/>
            <person name="Bestry I."/>
            <person name="Augustynowicz-Kopec E."/>
            <person name="Ptak J."/>
            <person name="Casanova J.L."/>
            <person name="Rowinska-Zakrzewska E."/>
        </authorList>
    </citation>
    <scope>VARIANT IMD27A THR-87</scope>
</reference>
<reference key="31">
    <citation type="journal article" date="2007" name="J. Clin. Immunol.">
        <title>Two patients with complete defects in interferon gamma receptor-dependent signaling.</title>
        <authorList>
            <person name="Noordzij J.G."/>
            <person name="Hartwig N.G."/>
            <person name="Verreck F.A."/>
            <person name="De Bruin-Versteeg S."/>
            <person name="De Boer T."/>
            <person name="Van Dissel J.T."/>
            <person name="De Groot R."/>
            <person name="Ottenhoff T.H."/>
            <person name="Van Dongen J.J."/>
        </authorList>
    </citation>
    <scope>VARIANT IMD27A TYR-85</scope>
    <scope>CHARACTERIZATION OF VARIANT IMD27A TYR-85</scope>
</reference>
<reference key="32">
    <citation type="journal article" date="2010" name="Am. J. Med. Genet. A">
        <title>Paternal uniparental isodisomy of chromosome 6 causing a complex syndrome including complete IFN-gamma receptor 1 deficiency.</title>
        <authorList>
            <person name="Prando C."/>
            <person name="Boisson-Dupuis S."/>
            <person name="Grant A.V."/>
            <person name="Kong X.F."/>
            <person name="Bustamante J."/>
            <person name="Feinberg J."/>
            <person name="Chapgier A."/>
            <person name="Rose Y."/>
            <person name="Janniere L."/>
            <person name="Rizzardi E."/>
            <person name="Zhang Q."/>
            <person name="Shanahan C.M."/>
            <person name="Viollet L."/>
            <person name="Lyonnet S."/>
            <person name="Abel L."/>
            <person name="Ruga E.M."/>
            <person name="Casanova J.L."/>
        </authorList>
    </citation>
    <scope>VARIANT IMD27A 113-TYR--SER-489 DEL</scope>
</reference>
<reference key="33">
    <citation type="journal article" date="2010" name="Mol. Immunol.">
        <title>Functional analysis of naturally occurring amino acid substitutions in human IFN-gammaR1.</title>
        <authorList>
            <person name="van de Wetering D."/>
            <person name="de Paus R.A."/>
            <person name="van Dissel J.T."/>
            <person name="van de Vosse E."/>
        </authorList>
    </citation>
    <scope>CHARACTERIZATION OF VARIANTS IMD27A GLU-61; GLY-63; CYS-66; PHE-77; TYR-77; TYR-85 AND THR-87</scope>
    <scope>CHARACTERIZATION OF VARIANTS MET-14; ILE-61; LEU-149; PRO-335; MET-352 AND PRO-467</scope>
    <scope>FUNCTION</scope>
    <scope>MUTAGENESIS OF VAL-61</scope>
</reference>
<reference key="34">
    <citation type="journal article" date="2012" name="Mediterr. J. Hematol. Infect. Dis.">
        <title>Mendelian susceptibility to mycobacterial disease in egyptian children.</title>
        <authorList>
            <person name="Galal N."/>
            <person name="Boutros J."/>
            <person name="Marsafy A."/>
            <person name="Kong X.F."/>
            <person name="Feinberg J."/>
            <person name="Casanova J.L."/>
            <person name="Boisson-Dupuis S."/>
            <person name="Bustamante J."/>
        </authorList>
    </citation>
    <scope>VARIANT IMD27A PHE-485</scope>
</reference>
<reference key="35">
    <citation type="journal article" date="2015" name="J. Allergy Clin. Immunol.">
        <title>Hemophagocytic lymphohistiocytosis in 2 patients with underlying IFN-gamma receptor deficiency.</title>
        <authorList>
            <person name="Tesi B."/>
            <person name="Sieni E."/>
            <person name="Neves C."/>
            <person name="Romano F."/>
            <person name="Cetica V."/>
            <person name="Cordeiro A.I."/>
            <person name="Chiang S."/>
            <person name="Schlums H."/>
            <person name="Galli L."/>
            <person name="Avenali S."/>
            <person name="Tondo A."/>
            <person name="Canessa C."/>
            <person name="Henter J.I."/>
            <person name="Nordenskjoeld M."/>
            <person name="Hsu A.P."/>
            <person name="Holland S.M."/>
            <person name="Neves J.F."/>
            <person name="Azzari C."/>
            <person name="Bryceson Y.T."/>
        </authorList>
    </citation>
    <scope>VARIANT IMD27A ARG-219</scope>
</reference>
<reference key="36">
    <citation type="journal article" date="2015" name="J. Allergy Clin. Immunol.">
        <title>Targeted deep sequencing identifies rare loss-of-function variants in IFNGR1 for risk of atopic dermatitis complicated by eczema herpeticum.</title>
        <authorList>
            <person name="Gao L."/>
            <person name="Bin L."/>
            <person name="Rafaels N.M."/>
            <person name="Huang L."/>
            <person name="Potee J."/>
            <person name="Ruczinski I."/>
            <person name="Beaty T.H."/>
            <person name="Paller A.S."/>
            <person name="Schneider L.C."/>
            <person name="Gallo R."/>
            <person name="Hanifin J.M."/>
            <person name="Beck L.A."/>
            <person name="Geha R.S."/>
            <person name="Mathias R.A."/>
            <person name="Barnes K.C."/>
            <person name="Leung D.Y.M."/>
        </authorList>
    </citation>
    <scope>CHARACTERIZATION OF VARIANTS MET-14; ILE-61 AND CYS-397</scope>
</reference>
<reference key="37">
    <citation type="journal article" date="2016" name="J. Investig. Med. High Impact Case Rep.">
        <title>Novel mutation of interferon-gamma receptor 1 gene presenting as early life mycobacterial bronchial disease.</title>
        <authorList>
            <person name="Gutierrez M.J."/>
            <person name="Kalra N."/>
            <person name="Horwitz A."/>
            <person name="Nino G."/>
        </authorList>
    </citation>
    <scope>VARIANT IMD27A 224-TRP--SER-489 DEL</scope>
</reference>
<sequence length="489" mass="54405">MALLFLLPLVMQGVSRAEMGTADLGPSSVPTPTNVTIESYNMNPIVYWEYQIMPQVPVFTVEVKNYGVKNSEWIDACINISHHYCNISDHVGDPSNSLWVRVKARVGQKESAYAKSEEFAVCRDGKIGPPKLDIRKEEKQIMIDIFHPSVFVNGDEQEVDYDPETTCYIRVYNVYVRMNGSEIQYKILTQKEDDCDEIQCQLAIPVSSLNSQYCVSAEGVLHVWGVTTEKSKEVCITIFNSSIKGSLWIPVVAALLLFLVLSLVFICFYIKKINPLKEKSIILPKSLISVVRSATLETKPESKYVSLITSYQPFSLEKEVVCEEPLSPATVPGMHTEDNPGKVEHTEELSSITEVVTTEENIPDVVPGSHLTPIERESSSPLSSNQSEPGSIALNSYHSRNCSESDHSRNGFDTDSSCLESHSSLSDSEFPPNNKGEIKTEGQELITVIKAPTSFGYDKPHVLVDLLVDDSGKESLIGYRPTEDSKEFS</sequence>
<name>INGR1_HUMAN</name>
<evidence type="ECO:0000250" key="1">
    <source>
        <dbReference type="UniProtKB" id="P15261"/>
    </source>
</evidence>
<evidence type="ECO:0000255" key="2"/>
<evidence type="ECO:0000256" key="3">
    <source>
        <dbReference type="SAM" id="MobiDB-lite"/>
    </source>
</evidence>
<evidence type="ECO:0000269" key="4">
    <source>
    </source>
</evidence>
<evidence type="ECO:0000269" key="5">
    <source>
    </source>
</evidence>
<evidence type="ECO:0000269" key="6">
    <source>
    </source>
</evidence>
<evidence type="ECO:0000269" key="7">
    <source>
    </source>
</evidence>
<evidence type="ECO:0000269" key="8">
    <source>
    </source>
</evidence>
<evidence type="ECO:0000269" key="9">
    <source>
    </source>
</evidence>
<evidence type="ECO:0000269" key="10">
    <source>
    </source>
</evidence>
<evidence type="ECO:0000269" key="11">
    <source>
    </source>
</evidence>
<evidence type="ECO:0000269" key="12">
    <source>
    </source>
</evidence>
<evidence type="ECO:0000269" key="13">
    <source>
    </source>
</evidence>
<evidence type="ECO:0000269" key="14">
    <source>
    </source>
</evidence>
<evidence type="ECO:0000269" key="15">
    <source>
    </source>
</evidence>
<evidence type="ECO:0000269" key="16">
    <source>
    </source>
</evidence>
<evidence type="ECO:0000269" key="17">
    <source>
    </source>
</evidence>
<evidence type="ECO:0000269" key="18">
    <source>
    </source>
</evidence>
<evidence type="ECO:0000269" key="19">
    <source>
    </source>
</evidence>
<evidence type="ECO:0000269" key="20">
    <source>
    </source>
</evidence>
<evidence type="ECO:0000269" key="21">
    <source>
    </source>
</evidence>
<evidence type="ECO:0000269" key="22">
    <source>
    </source>
</evidence>
<evidence type="ECO:0000269" key="23">
    <source>
    </source>
</evidence>
<evidence type="ECO:0000269" key="24">
    <source>
    </source>
</evidence>
<evidence type="ECO:0000269" key="25">
    <source>
    </source>
</evidence>
<evidence type="ECO:0000269" key="26">
    <source>
    </source>
</evidence>
<evidence type="ECO:0000269" key="27">
    <source>
    </source>
</evidence>
<evidence type="ECO:0000269" key="28">
    <source>
    </source>
</evidence>
<evidence type="ECO:0000269" key="29">
    <source>
    </source>
</evidence>
<evidence type="ECO:0000269" key="30">
    <source>
    </source>
</evidence>
<evidence type="ECO:0000269" key="31">
    <source>
    </source>
</evidence>
<evidence type="ECO:0000269" key="32">
    <source>
    </source>
</evidence>
<evidence type="ECO:0000269" key="33">
    <source>
    </source>
</evidence>
<evidence type="ECO:0000269" key="34">
    <source ref="2"/>
</evidence>
<evidence type="ECO:0000303" key="35">
    <source>
    </source>
</evidence>
<evidence type="ECO:0000303" key="36">
    <source>
    </source>
</evidence>
<evidence type="ECO:0000303" key="37">
    <source>
    </source>
</evidence>
<evidence type="ECO:0000305" key="38"/>
<evidence type="ECO:0000312" key="39">
    <source>
        <dbReference type="HGNC" id="HGNC:5439"/>
    </source>
</evidence>
<evidence type="ECO:0007829" key="40">
    <source>
        <dbReference type="PDB" id="1FYH"/>
    </source>
</evidence>
<evidence type="ECO:0007829" key="41">
    <source>
        <dbReference type="PDB" id="6E3K"/>
    </source>
</evidence>
<comment type="function">
    <text evidence="1 7 17 24 26 27 28 29">Receptor subunit for interferon gamma/INFG that plays crucial roles in antimicrobial, antiviral, and antitumor responses by activating effector immune cells and enhancing antigen presentation (PubMed:20015550). Associates with transmembrane accessory factor IFNGR2 to form a functional receptor (PubMed:10986460, PubMed:2971451, PubMed:7615558, PubMed:7617032, PubMed:7673114). Upon ligand binding, the intracellular domain of IFNGR1 opens out to allow association of downstream signaling components JAK1 and JAK2. In turn, activated JAK1 phosphorylates IFNGR1 to form a docking site for STAT1. Subsequent phosphorylation of STAT1 leads to dimerization, translocation to the nucleus, and stimulation of target gene transcription (PubMed:28883123). STAT3 can also be activated in a similar manner although activation seems weaker. IFNGR1 intracellular domain phosphorylation also provides a docking site for SOCS1 that regulates the JAK-STAT pathway by competing with STAT1 binding to IFNGR1 (By similarity).</text>
</comment>
<comment type="subunit">
    <text evidence="1 27 30 32">Monomer (PubMed:9367779). Heterodimer with IFNGR2, to form the IFNG receptor complex (PubMed:7615558). Interacts with JAK1 (PubMed:7615558). Interacts (when phosphorylated) with STAT1 (PubMed:8156998). Interacts with SOCS1 (By similarity).</text>
</comment>
<comment type="interaction">
    <interactant intactId="EBI-1030755">
        <id>P15260</id>
    </interactant>
    <interactant intactId="EBI-13059134">
        <id>Q13520</id>
        <label>AQP6</label>
    </interactant>
    <organismsDiffer>false</organismsDiffer>
    <experiments>3</experiments>
</comment>
<comment type="interaction">
    <interactant intactId="EBI-1030755">
        <id>P15260</id>
    </interactant>
    <interactant intactId="EBI-1030767">
        <id>P01579</id>
        <label>IFNG</label>
    </interactant>
    <organismsDiffer>false</organismsDiffer>
    <experiments>5</experiments>
</comment>
<comment type="interaction">
    <interactant intactId="EBI-1030755">
        <id>P15260</id>
    </interactant>
    <interactant intactId="EBI-10317425">
        <id>Q9NZG7</id>
        <label>NINJ2</label>
    </interactant>
    <organismsDiffer>false</organismsDiffer>
    <experiments>3</experiments>
</comment>
<comment type="interaction">
    <interactant intactId="EBI-1030755">
        <id>P15260</id>
    </interactant>
    <interactant intactId="EBI-8636004">
        <id>Q96GQ5</id>
        <label>RUSF1</label>
    </interactant>
    <organismsDiffer>false</organismsDiffer>
    <experiments>4</experiments>
</comment>
<comment type="interaction">
    <interactant intactId="EBI-1030755">
        <id>P15260</id>
    </interactant>
    <interactant intactId="EBI-17198620">
        <id>Q92581-2</id>
        <label>SLC9A6</label>
    </interactant>
    <organismsDiffer>false</organismsDiffer>
    <experiments>3</experiments>
</comment>
<comment type="interaction">
    <interactant intactId="EBI-1030755">
        <id>P15260</id>
    </interactant>
    <interactant intactId="EBI-1057697">
        <id>P42224</id>
        <label>STAT1</label>
    </interactant>
    <organismsDiffer>false</organismsDiffer>
    <experiments>4</experiments>
</comment>
<comment type="interaction">
    <interactant intactId="EBI-1030755">
        <id>P15260</id>
    </interactant>
    <interactant intactId="EBI-448878">
        <id>Q13586</id>
        <label>STIM1</label>
    </interactant>
    <organismsDiffer>false</organismsDiffer>
    <experiments>3</experiments>
</comment>
<comment type="interaction">
    <interactant intactId="EBI-1030755">
        <id>P15260</id>
    </interactant>
    <interactant intactId="EBI-8644968">
        <id>Q9NV29</id>
        <label>TMEM100</label>
    </interactant>
    <organismsDiffer>false</organismsDiffer>
    <experiments>3</experiments>
</comment>
<comment type="interaction">
    <interactant intactId="EBI-1030755">
        <id>P15260</id>
    </interactant>
    <interactant intactId="EBI-10982110">
        <id>Q96Q45-2</id>
        <label>TMEM237</label>
    </interactant>
    <organismsDiffer>false</organismsDiffer>
    <experiments>3</experiments>
</comment>
<comment type="subcellular location">
    <subcellularLocation>
        <location evidence="6 24">Cell membrane</location>
        <topology evidence="2">Single-pass type I membrane protein</topology>
    </subcellularLocation>
</comment>
<comment type="alternative products">
    <event type="alternative splicing"/>
    <isoform>
        <id>P15260-1</id>
        <name>1</name>
        <sequence type="displayed"/>
    </isoform>
    <isoform>
        <id>P15260-2</id>
        <name>2</name>
        <sequence type="described" ref="VSP_055589 VSP_055590 VSP_055591"/>
    </isoform>
</comment>
<comment type="PTM">
    <text evidence="25 27 29 30">Phosphorylated at Ser/Thr residues. Phosphorylation of Tyr-457 is required for IFNG receptor signal transduction (PubMed:8156998). Influenza virus infection leads to phosphorylation in a CSNK1A1-dependent manner (PubMed:29343571).</text>
</comment>
<comment type="PTM">
    <text evidence="24 25">Ubiquitinated after phosphorylation in a CSNK1A1-dependent manner, leading to the lysosome-dependent degradation (PubMed:29343571). Proteasomally degraded through 'Lys-48'-mediated ubiquitination (PubMed:28883123). Ubiquitination is necessary for efficient IFNGR1 signaling (PubMed:28883123).</text>
</comment>
<comment type="polymorphism">
    <text>A genetic variation in the IFNGR1 gene is associated with susceptibility to Helicobacter pylori infection [MIM:600263].</text>
</comment>
<comment type="disease" evidence="6 8 13 14 15 16 17 18 19 20 22 23 33">
    <disease id="DI-01964">
        <name>Immunodeficiency 27A</name>
        <acronym>IMD27A</acronym>
        <description>A form of Mendelian susceptibility to mycobacterial disease, a rare condition caused by impairment of interferon-gamma mediated immunity. It is characterized by predisposition to illness caused by moderately virulent mycobacterial species, such as Bacillus Calmette-Guerin (BCG) vaccine, environmental non-tuberculous mycobacteria, and by the more virulent Mycobacterium tuberculosis. Other microorganisms rarely cause severe clinical disease in individuals with susceptibility to mycobacterial infections, with the exception of Salmonella which infects less than 50% of these individuals. Clinical outcome severity depends on the degree of impairment of interferon-gamma mediated immunity. Some patients die of overwhelming mycobacterial disease with lepromatous-like lesions in early childhood, whereas others develop, later in life, disseminated but curable infections with tuberculoid granulomas.</description>
        <dbReference type="MIM" id="209950"/>
    </disease>
    <text>The disease is caused by variants affecting the gene represented in this entry.</text>
</comment>
<comment type="disease" evidence="5 10">
    <disease id="DI-04225">
        <name>Immunodeficiency 27B</name>
        <acronym>IMD27B</acronym>
        <description>A form of Mendelian susceptibility to mycobacterial disease, a rare condition caused by impairment of interferon-gamma mediated immunity. It is characterized by predisposition to illness caused by moderately virulent mycobacterial species, such as Bacillus Calmette-Guerin (BCG) vaccine, environmental non-tuberculous mycobacteria, and by the more virulent Mycobacterium tuberculosis. Other microorganisms rarely cause severe clinical disease in individuals with susceptibility to mycobacterial infections, with the exception of Salmonella which infects less than 50% of these individuals. Clinical outcome severity depends on the degree of impairment of interferon-gamma mediated immunity. Some patients die of overwhelming mycobacterial disease with lepromatous-like lesions in early childhood, whereas others develop, later in life, disseminated but curable infections with tuberculoid granulomas. IMD27B commonly presents with recurrent, moderately severe infections with environmental mycobacteria or BCG. Salmonellosis is present in about 5% of patients.</description>
        <dbReference type="MIM" id="615978"/>
    </disease>
    <text>The disease is caused by variants affecting the gene represented in this entry.</text>
</comment>
<comment type="similarity">
    <text evidence="38">Belongs to the type II cytokine receptor family.</text>
</comment>
<comment type="online information" name="IFNGR1base">
    <link uri="https://databases.lovd.nl/shared/genes/IFNGR1"/>
    <text>IFNGR1 mutation db</text>
</comment>
<proteinExistence type="evidence at protein level"/>
<dbReference type="EMBL" id="J03143">
    <property type="protein sequence ID" value="AAA52731.1"/>
    <property type="molecule type" value="mRNA"/>
</dbReference>
<dbReference type="EMBL" id="AY594694">
    <property type="protein sequence ID" value="AAS89302.1"/>
    <property type="molecule type" value="Genomic_DNA"/>
</dbReference>
<dbReference type="EMBL" id="BT006814">
    <property type="protein sequence ID" value="AAP35460.1"/>
    <property type="molecule type" value="mRNA"/>
</dbReference>
<dbReference type="EMBL" id="AK294252">
    <property type="protein sequence ID" value="BAG57548.1"/>
    <property type="molecule type" value="mRNA"/>
</dbReference>
<dbReference type="EMBL" id="AL050337">
    <property type="status" value="NOT_ANNOTATED_CDS"/>
    <property type="molecule type" value="Genomic_DNA"/>
</dbReference>
<dbReference type="EMBL" id="CH471051">
    <property type="protein sequence ID" value="EAW47931.1"/>
    <property type="molecule type" value="Genomic_DNA"/>
</dbReference>
<dbReference type="EMBL" id="CH471051">
    <property type="protein sequence ID" value="EAW47932.1"/>
    <property type="molecule type" value="Genomic_DNA"/>
</dbReference>
<dbReference type="EMBL" id="BC005333">
    <property type="protein sequence ID" value="AAH05333.1"/>
    <property type="molecule type" value="mRNA"/>
</dbReference>
<dbReference type="CCDS" id="CCDS5185.1">
    <molecule id="P15260-1"/>
</dbReference>
<dbReference type="PIR" id="A31555">
    <property type="entry name" value="A31555"/>
</dbReference>
<dbReference type="RefSeq" id="NP_000407.1">
    <molecule id="P15260-1"/>
    <property type="nucleotide sequence ID" value="NM_000416.3"/>
</dbReference>
<dbReference type="PDB" id="1FG9">
    <property type="method" value="X-ray"/>
    <property type="resolution" value="2.90 A"/>
    <property type="chains" value="C/D/E=18-262"/>
</dbReference>
<dbReference type="PDB" id="1FYH">
    <property type="method" value="X-ray"/>
    <property type="resolution" value="2.04 A"/>
    <property type="chains" value="B/E=18-246"/>
</dbReference>
<dbReference type="PDB" id="1JRH">
    <property type="method" value="X-ray"/>
    <property type="resolution" value="2.80 A"/>
    <property type="chains" value="I=18-125"/>
</dbReference>
<dbReference type="PDB" id="6E3K">
    <property type="method" value="X-ray"/>
    <property type="resolution" value="3.25 A"/>
    <property type="chains" value="C/D=18-246"/>
</dbReference>
<dbReference type="PDB" id="6E3L">
    <property type="method" value="X-ray"/>
    <property type="resolution" value="3.80 A"/>
    <property type="chains" value="C/D=18-246"/>
</dbReference>
<dbReference type="PDBsum" id="1FG9"/>
<dbReference type="PDBsum" id="1FYH"/>
<dbReference type="PDBsum" id="1JRH"/>
<dbReference type="PDBsum" id="6E3K"/>
<dbReference type="PDBsum" id="6E3L"/>
<dbReference type="SMR" id="P15260"/>
<dbReference type="BioGRID" id="109681">
    <property type="interactions" value="103"/>
</dbReference>
<dbReference type="ComplexPortal" id="CPX-6015">
    <property type="entry name" value="Interferon gamma receptor-ligand complex"/>
</dbReference>
<dbReference type="CORUM" id="P15260"/>
<dbReference type="DIP" id="DIP-47N"/>
<dbReference type="FunCoup" id="P15260">
    <property type="interactions" value="1129"/>
</dbReference>
<dbReference type="IntAct" id="P15260">
    <property type="interactions" value="58"/>
</dbReference>
<dbReference type="MINT" id="P15260"/>
<dbReference type="STRING" id="9606.ENSP00000356713"/>
<dbReference type="BindingDB" id="P15260"/>
<dbReference type="ChEMBL" id="CHEMBL2364171"/>
<dbReference type="DrugBank" id="DB00033">
    <property type="generic name" value="Interferon gamma-1b"/>
</dbReference>
<dbReference type="GlyConnect" id="294">
    <property type="glycosylation" value="6 N-Linked glycans (1 site)"/>
</dbReference>
<dbReference type="GlyCosmos" id="P15260">
    <property type="glycosylation" value="5 sites, 10 glycans"/>
</dbReference>
<dbReference type="GlyGen" id="P15260">
    <property type="glycosylation" value="6 sites, 13 N-linked glycans (5 sites)"/>
</dbReference>
<dbReference type="iPTMnet" id="P15260"/>
<dbReference type="PhosphoSitePlus" id="P15260"/>
<dbReference type="SwissPalm" id="P15260"/>
<dbReference type="BioMuta" id="IFNGR1"/>
<dbReference type="DMDM" id="124474"/>
<dbReference type="jPOST" id="P15260"/>
<dbReference type="MassIVE" id="P15260"/>
<dbReference type="PaxDb" id="9606-ENSP00000356713"/>
<dbReference type="PeptideAtlas" id="P15260"/>
<dbReference type="ProteomicsDB" id="4077"/>
<dbReference type="ProteomicsDB" id="53122">
    <molecule id="P15260-1"/>
</dbReference>
<dbReference type="Pumba" id="P15260"/>
<dbReference type="ABCD" id="P15260">
    <property type="antibodies" value="10 sequenced antibodies"/>
</dbReference>
<dbReference type="Antibodypedia" id="3840">
    <property type="antibodies" value="808 antibodies from 42 providers"/>
</dbReference>
<dbReference type="CPTC" id="P15260">
    <property type="antibodies" value="3 antibodies"/>
</dbReference>
<dbReference type="DNASU" id="3459"/>
<dbReference type="Ensembl" id="ENST00000367739.9">
    <molecule id="P15260-1"/>
    <property type="protein sequence ID" value="ENSP00000356713.5"/>
    <property type="gene ID" value="ENSG00000027697.16"/>
</dbReference>
<dbReference type="GeneID" id="3459"/>
<dbReference type="KEGG" id="hsa:3459"/>
<dbReference type="MANE-Select" id="ENST00000367739.9">
    <property type="protein sequence ID" value="ENSP00000356713.5"/>
    <property type="RefSeq nucleotide sequence ID" value="NM_000416.3"/>
    <property type="RefSeq protein sequence ID" value="NP_000407.1"/>
</dbReference>
<dbReference type="UCSC" id="uc003qho.3">
    <molecule id="P15260-1"/>
    <property type="organism name" value="human"/>
</dbReference>
<dbReference type="AGR" id="HGNC:5439"/>
<dbReference type="CTD" id="3459"/>
<dbReference type="DisGeNET" id="3459"/>
<dbReference type="GeneCards" id="IFNGR1"/>
<dbReference type="HGNC" id="HGNC:5439">
    <property type="gene designation" value="IFNGR1"/>
</dbReference>
<dbReference type="HPA" id="ENSG00000027697">
    <property type="expression patterns" value="Low tissue specificity"/>
</dbReference>
<dbReference type="MalaCards" id="IFNGR1"/>
<dbReference type="MIM" id="107470">
    <property type="type" value="gene"/>
</dbReference>
<dbReference type="MIM" id="209950">
    <property type="type" value="phenotype"/>
</dbReference>
<dbReference type="MIM" id="600263">
    <property type="type" value="phenotype"/>
</dbReference>
<dbReference type="MIM" id="615978">
    <property type="type" value="phenotype"/>
</dbReference>
<dbReference type="neXtProt" id="NX_P15260"/>
<dbReference type="OpenTargets" id="ENSG00000027697"/>
<dbReference type="Orphanet" id="319581">
    <property type="disease" value="Autosomal dominant mendelian susceptibility to mycobacterial diseases due to partial IFNgammaR1 deficiency"/>
</dbReference>
<dbReference type="Orphanet" id="319569">
    <property type="disease" value="Autosomal recessive mendelian susceptibility to mycobacterial diseases due to partial IFNgammaR1 deficiency"/>
</dbReference>
<dbReference type="Orphanet" id="117">
    <property type="disease" value="Behcet disease"/>
</dbReference>
<dbReference type="Orphanet" id="99898">
    <property type="disease" value="Mendelian susceptibility to mycobacterial diseases due to complete IFNgammaR1 deficiency"/>
</dbReference>
<dbReference type="PharmGKB" id="PA29675"/>
<dbReference type="VEuPathDB" id="HostDB:ENSG00000027697"/>
<dbReference type="eggNOG" id="ENOG502RXGW">
    <property type="taxonomic scope" value="Eukaryota"/>
</dbReference>
<dbReference type="GeneTree" id="ENSGT00510000048929"/>
<dbReference type="HOGENOM" id="CLU_043814_0_0_1"/>
<dbReference type="InParanoid" id="P15260"/>
<dbReference type="OMA" id="NIMLPKS"/>
<dbReference type="OrthoDB" id="9946382at2759"/>
<dbReference type="PAN-GO" id="P15260">
    <property type="GO annotations" value="3 GO annotations based on evolutionary models"/>
</dbReference>
<dbReference type="PhylomeDB" id="P15260"/>
<dbReference type="TreeFam" id="TF338358"/>
<dbReference type="PathwayCommons" id="P15260"/>
<dbReference type="Reactome" id="R-HSA-877300">
    <property type="pathway name" value="Interferon gamma signaling"/>
</dbReference>
<dbReference type="Reactome" id="R-HSA-877312">
    <property type="pathway name" value="Regulation of IFNG signaling"/>
</dbReference>
<dbReference type="Reactome" id="R-HSA-9679191">
    <property type="pathway name" value="Potential therapeutics for SARS"/>
</dbReference>
<dbReference type="Reactome" id="R-HSA-9732724">
    <property type="pathway name" value="IFNG signaling activates MAPKs"/>
</dbReference>
<dbReference type="SignaLink" id="P15260"/>
<dbReference type="SIGNOR" id="P15260"/>
<dbReference type="BioGRID-ORCS" id="3459">
    <property type="hits" value="26 hits in 1183 CRISPR screens"/>
</dbReference>
<dbReference type="ChiTaRS" id="IFNGR1">
    <property type="organism name" value="human"/>
</dbReference>
<dbReference type="EvolutionaryTrace" id="P15260"/>
<dbReference type="GeneWiki" id="Interferon_gamma_receptor_1"/>
<dbReference type="GenomeRNAi" id="3459"/>
<dbReference type="Pharos" id="P15260">
    <property type="development level" value="Tbio"/>
</dbReference>
<dbReference type="PRO" id="PR:P15260"/>
<dbReference type="Proteomes" id="UP000005640">
    <property type="component" value="Chromosome 6"/>
</dbReference>
<dbReference type="RNAct" id="P15260">
    <property type="molecule type" value="protein"/>
</dbReference>
<dbReference type="Bgee" id="ENSG00000027697">
    <property type="expression patterns" value="Expressed in lower lobe of lung and 213 other cell types or tissues"/>
</dbReference>
<dbReference type="ExpressionAtlas" id="P15260">
    <property type="expression patterns" value="baseline and differential"/>
</dbReference>
<dbReference type="GO" id="GO:0016020">
    <property type="term" value="C:membrane"/>
    <property type="evidence" value="ECO:0000314"/>
    <property type="project" value="UniProt"/>
</dbReference>
<dbReference type="GO" id="GO:0005886">
    <property type="term" value="C:plasma membrane"/>
    <property type="evidence" value="ECO:0000314"/>
    <property type="project" value="HPA"/>
</dbReference>
<dbReference type="GO" id="GO:0019955">
    <property type="term" value="F:cytokine binding"/>
    <property type="evidence" value="ECO:0007669"/>
    <property type="project" value="InterPro"/>
</dbReference>
<dbReference type="GO" id="GO:0004896">
    <property type="term" value="F:cytokine receptor activity"/>
    <property type="evidence" value="ECO:0000318"/>
    <property type="project" value="GO_Central"/>
</dbReference>
<dbReference type="GO" id="GO:0004906">
    <property type="term" value="F:type II interferon receptor activity"/>
    <property type="evidence" value="ECO:0000314"/>
    <property type="project" value="UniProt"/>
</dbReference>
<dbReference type="GO" id="GO:0048143">
    <property type="term" value="P:astrocyte activation"/>
    <property type="evidence" value="ECO:0000250"/>
    <property type="project" value="ARUK-UCL"/>
</dbReference>
<dbReference type="GO" id="GO:0098586">
    <property type="term" value="P:cellular response to virus"/>
    <property type="evidence" value="ECO:0000303"/>
    <property type="project" value="ComplexPortal"/>
</dbReference>
<dbReference type="GO" id="GO:0019221">
    <property type="term" value="P:cytokine-mediated signaling pathway"/>
    <property type="evidence" value="ECO:0000318"/>
    <property type="project" value="GO_Central"/>
</dbReference>
<dbReference type="GO" id="GO:0051607">
    <property type="term" value="P:defense response to virus"/>
    <property type="evidence" value="ECO:0007669"/>
    <property type="project" value="Ensembl"/>
</dbReference>
<dbReference type="GO" id="GO:0001774">
    <property type="term" value="P:microglial cell activation"/>
    <property type="evidence" value="ECO:0000250"/>
    <property type="project" value="ARUK-UCL"/>
</dbReference>
<dbReference type="GO" id="GO:1900222">
    <property type="term" value="P:negative regulation of amyloid-beta clearance"/>
    <property type="evidence" value="ECO:0000250"/>
    <property type="project" value="ARUK-UCL"/>
</dbReference>
<dbReference type="GO" id="GO:1902004">
    <property type="term" value="P:positive regulation of amyloid-beta formation"/>
    <property type="evidence" value="ECO:0000250"/>
    <property type="project" value="ARUK-UCL"/>
</dbReference>
<dbReference type="GO" id="GO:0010628">
    <property type="term" value="P:positive regulation of gene expression"/>
    <property type="evidence" value="ECO:0000250"/>
    <property type="project" value="ARUK-UCL"/>
</dbReference>
<dbReference type="GO" id="GO:0032760">
    <property type="term" value="P:positive regulation of tumor necrosis factor production"/>
    <property type="evidence" value="ECO:0000250"/>
    <property type="project" value="ARUK-UCL"/>
</dbReference>
<dbReference type="GO" id="GO:0009615">
    <property type="term" value="P:response to virus"/>
    <property type="evidence" value="ECO:0000304"/>
    <property type="project" value="ProtInc"/>
</dbReference>
<dbReference type="GO" id="GO:0007165">
    <property type="term" value="P:signal transduction"/>
    <property type="evidence" value="ECO:0000304"/>
    <property type="project" value="ProtInc"/>
</dbReference>
<dbReference type="GO" id="GO:0060333">
    <property type="term" value="P:type II interferon-mediated signaling pathway"/>
    <property type="evidence" value="ECO:0000314"/>
    <property type="project" value="UniProt"/>
</dbReference>
<dbReference type="GO" id="GO:0038196">
    <property type="term" value="P:type III interferon-mediated signaling pathway"/>
    <property type="evidence" value="ECO:0000314"/>
    <property type="project" value="UniProt"/>
</dbReference>
<dbReference type="FunFam" id="2.60.40.10:FF:001244">
    <property type="entry name" value="Interferon gamma receptor 1"/>
    <property type="match status" value="1"/>
</dbReference>
<dbReference type="FunFam" id="2.60.40.10:FF:001425">
    <property type="entry name" value="Interferon gamma receptor 1"/>
    <property type="match status" value="1"/>
</dbReference>
<dbReference type="Gene3D" id="2.60.40.10">
    <property type="entry name" value="Immunoglobulins"/>
    <property type="match status" value="2"/>
</dbReference>
<dbReference type="InterPro" id="IPR003961">
    <property type="entry name" value="FN3_dom"/>
</dbReference>
<dbReference type="InterPro" id="IPR036116">
    <property type="entry name" value="FN3_sf"/>
</dbReference>
<dbReference type="InterPro" id="IPR021126">
    <property type="entry name" value="IFN_gamma_rc_D2_pox/mammal"/>
</dbReference>
<dbReference type="InterPro" id="IPR013783">
    <property type="entry name" value="Ig-like_fold"/>
</dbReference>
<dbReference type="InterPro" id="IPR008355">
    <property type="entry name" value="Interferon_gamma_rcpt_asu"/>
</dbReference>
<dbReference type="InterPro" id="IPR050650">
    <property type="entry name" value="Type-II_Cytokine-TF_Rcpt"/>
</dbReference>
<dbReference type="PANTHER" id="PTHR20859:SF5">
    <property type="entry name" value="INTERFERON GAMMA RECEPTOR 1"/>
    <property type="match status" value="1"/>
</dbReference>
<dbReference type="PANTHER" id="PTHR20859">
    <property type="entry name" value="INTERFERON/INTERLEUKIN RECEPTOR"/>
    <property type="match status" value="1"/>
</dbReference>
<dbReference type="Pfam" id="PF07140">
    <property type="entry name" value="IFNGR1_D2"/>
    <property type="match status" value="1"/>
</dbReference>
<dbReference type="Pfam" id="PF20634">
    <property type="entry name" value="IFNGR1_transm"/>
    <property type="match status" value="1"/>
</dbReference>
<dbReference type="Pfam" id="PF01108">
    <property type="entry name" value="Tissue_fac"/>
    <property type="match status" value="1"/>
</dbReference>
<dbReference type="PRINTS" id="PR01777">
    <property type="entry name" value="INTERFERONGR"/>
</dbReference>
<dbReference type="SUPFAM" id="SSF49265">
    <property type="entry name" value="Fibronectin type III"/>
    <property type="match status" value="2"/>
</dbReference>